<gene>
    <name evidence="1" type="primary">fadB</name>
    <name type="ordered locus">SPAB_04939</name>
</gene>
<proteinExistence type="inferred from homology"/>
<evidence type="ECO:0000255" key="1">
    <source>
        <dbReference type="HAMAP-Rule" id="MF_01621"/>
    </source>
</evidence>
<evidence type="ECO:0000256" key="2">
    <source>
        <dbReference type="SAM" id="MobiDB-lite"/>
    </source>
</evidence>
<comment type="function">
    <text evidence="1">Involved in the aerobic and anaerobic degradation of long-chain fatty acids via beta-oxidation cycle. Catalyzes the formation of 3-oxoacyl-CoA from enoyl-CoA via L-3-hydroxyacyl-CoA. It can also use D-3-hydroxyacyl-CoA and cis-3-enoyl-CoA as substrate.</text>
</comment>
<comment type="catalytic activity">
    <reaction evidence="1">
        <text>a (3S)-3-hydroxyacyl-CoA + NAD(+) = a 3-oxoacyl-CoA + NADH + H(+)</text>
        <dbReference type="Rhea" id="RHEA:22432"/>
        <dbReference type="ChEBI" id="CHEBI:15378"/>
        <dbReference type="ChEBI" id="CHEBI:57318"/>
        <dbReference type="ChEBI" id="CHEBI:57540"/>
        <dbReference type="ChEBI" id="CHEBI:57945"/>
        <dbReference type="ChEBI" id="CHEBI:90726"/>
        <dbReference type="EC" id="1.1.1.35"/>
    </reaction>
</comment>
<comment type="catalytic activity">
    <reaction evidence="1">
        <text>a (3S)-3-hydroxyacyl-CoA = a (2E)-enoyl-CoA + H2O</text>
        <dbReference type="Rhea" id="RHEA:16105"/>
        <dbReference type="ChEBI" id="CHEBI:15377"/>
        <dbReference type="ChEBI" id="CHEBI:57318"/>
        <dbReference type="ChEBI" id="CHEBI:58856"/>
        <dbReference type="EC" id="4.2.1.17"/>
    </reaction>
</comment>
<comment type="catalytic activity">
    <reaction evidence="1">
        <text>a 4-saturated-(3S)-3-hydroxyacyl-CoA = a (3E)-enoyl-CoA + H2O</text>
        <dbReference type="Rhea" id="RHEA:20724"/>
        <dbReference type="ChEBI" id="CHEBI:15377"/>
        <dbReference type="ChEBI" id="CHEBI:58521"/>
        <dbReference type="ChEBI" id="CHEBI:137480"/>
        <dbReference type="EC" id="4.2.1.17"/>
    </reaction>
</comment>
<comment type="catalytic activity">
    <reaction evidence="1">
        <text>(3S)-3-hydroxybutanoyl-CoA = (3R)-3-hydroxybutanoyl-CoA</text>
        <dbReference type="Rhea" id="RHEA:21760"/>
        <dbReference type="ChEBI" id="CHEBI:57315"/>
        <dbReference type="ChEBI" id="CHEBI:57316"/>
        <dbReference type="EC" id="5.1.2.3"/>
    </reaction>
</comment>
<comment type="catalytic activity">
    <reaction evidence="1">
        <text>a (3Z)-enoyl-CoA = a 4-saturated (2E)-enoyl-CoA</text>
        <dbReference type="Rhea" id="RHEA:45900"/>
        <dbReference type="ChEBI" id="CHEBI:85097"/>
        <dbReference type="ChEBI" id="CHEBI:85489"/>
        <dbReference type="EC" id="5.3.3.8"/>
    </reaction>
</comment>
<comment type="catalytic activity">
    <reaction evidence="1">
        <text>a (3E)-enoyl-CoA = a 4-saturated (2E)-enoyl-CoA</text>
        <dbReference type="Rhea" id="RHEA:45228"/>
        <dbReference type="ChEBI" id="CHEBI:58521"/>
        <dbReference type="ChEBI" id="CHEBI:85097"/>
        <dbReference type="EC" id="5.3.3.8"/>
    </reaction>
</comment>
<comment type="pathway">
    <text evidence="1">Lipid metabolism; fatty acid beta-oxidation.</text>
</comment>
<comment type="subunit">
    <text evidence="1">Heterotetramer of two alpha chains (FadB) and two beta chains (FadA).</text>
</comment>
<comment type="similarity">
    <text evidence="1">In the N-terminal section; belongs to the enoyl-CoA hydratase/isomerase family.</text>
</comment>
<comment type="similarity">
    <text evidence="1">In the C-terminal section; belongs to the 3-hydroxyacyl-CoA dehydrogenase family.</text>
</comment>
<protein>
    <recommendedName>
        <fullName evidence="1">Fatty acid oxidation complex subunit alpha</fullName>
    </recommendedName>
    <domain>
        <recommendedName>
            <fullName evidence="1">Enoyl-CoA hydratase/Delta(3)-cis-Delta(2)-trans-enoyl-CoA isomerase/3-hydroxybutyryl-CoA epimerase</fullName>
            <ecNumber evidence="1">4.2.1.17</ecNumber>
            <ecNumber evidence="1">5.1.2.3</ecNumber>
            <ecNumber evidence="1">5.3.3.8</ecNumber>
        </recommendedName>
    </domain>
    <domain>
        <recommendedName>
            <fullName evidence="1">3-hydroxyacyl-CoA dehydrogenase</fullName>
            <ecNumber evidence="1">1.1.1.35</ecNumber>
        </recommendedName>
    </domain>
</protein>
<name>FADB_SALPB</name>
<organism>
    <name type="scientific">Salmonella paratyphi B (strain ATCC BAA-1250 / SPB7)</name>
    <dbReference type="NCBI Taxonomy" id="1016998"/>
    <lineage>
        <taxon>Bacteria</taxon>
        <taxon>Pseudomonadati</taxon>
        <taxon>Pseudomonadota</taxon>
        <taxon>Gammaproteobacteria</taxon>
        <taxon>Enterobacterales</taxon>
        <taxon>Enterobacteriaceae</taxon>
        <taxon>Salmonella</taxon>
    </lineage>
</organism>
<accession>A9MYB0</accession>
<feature type="chain" id="PRO_1000088081" description="Fatty acid oxidation complex subunit alpha">
    <location>
        <begin position="1"/>
        <end position="729"/>
    </location>
</feature>
<feature type="region of interest" description="Enoyl-CoA hydratase/isomerase" evidence="1">
    <location>
        <begin position="1"/>
        <end position="189"/>
    </location>
</feature>
<feature type="region of interest" description="3-hydroxyacyl-CoA dehydrogenase" evidence="1">
    <location>
        <begin position="311"/>
        <end position="729"/>
    </location>
</feature>
<feature type="region of interest" description="Disordered" evidence="2">
    <location>
        <begin position="708"/>
        <end position="729"/>
    </location>
</feature>
<feature type="active site" description="For 3-hydroxyacyl-CoA dehydrogenase activity" evidence="1">
    <location>
        <position position="450"/>
    </location>
</feature>
<feature type="binding site" evidence="1">
    <location>
        <position position="296"/>
    </location>
    <ligand>
        <name>substrate</name>
    </ligand>
</feature>
<feature type="binding site" evidence="1">
    <location>
        <position position="324"/>
    </location>
    <ligand>
        <name>NAD(+)</name>
        <dbReference type="ChEBI" id="CHEBI:57540"/>
    </ligand>
</feature>
<feature type="binding site" evidence="1">
    <location>
        <position position="343"/>
    </location>
    <ligand>
        <name>NAD(+)</name>
        <dbReference type="ChEBI" id="CHEBI:57540"/>
    </ligand>
</feature>
<feature type="binding site" evidence="1">
    <location>
        <begin position="400"/>
        <end position="402"/>
    </location>
    <ligand>
        <name>NAD(+)</name>
        <dbReference type="ChEBI" id="CHEBI:57540"/>
    </ligand>
</feature>
<feature type="binding site" evidence="1">
    <location>
        <position position="407"/>
    </location>
    <ligand>
        <name>NAD(+)</name>
        <dbReference type="ChEBI" id="CHEBI:57540"/>
    </ligand>
</feature>
<feature type="binding site" evidence="1">
    <location>
        <position position="429"/>
    </location>
    <ligand>
        <name>NAD(+)</name>
        <dbReference type="ChEBI" id="CHEBI:57540"/>
    </ligand>
</feature>
<feature type="binding site" evidence="1">
    <location>
        <position position="453"/>
    </location>
    <ligand>
        <name>NAD(+)</name>
        <dbReference type="ChEBI" id="CHEBI:57540"/>
    </ligand>
</feature>
<feature type="binding site" evidence="1">
    <location>
        <position position="500"/>
    </location>
    <ligand>
        <name>substrate</name>
    </ligand>
</feature>
<feature type="binding site" evidence="1">
    <location>
        <position position="660"/>
    </location>
    <ligand>
        <name>substrate</name>
    </ligand>
</feature>
<feature type="site" description="Important for catalytic activity" evidence="1">
    <location>
        <position position="119"/>
    </location>
</feature>
<feature type="site" description="Important for catalytic activity" evidence="1">
    <location>
        <position position="139"/>
    </location>
</feature>
<sequence length="729" mass="79608">MLYKGDTLYLDWLEDGIAELVFDAPGSVNKLDTATVASLGQALEVLEKQHDLKGLLLRSNKAAFIVGADITEFLSLFLVPEEQLSQWLHFANSVFNRLEDLPVPTLAAVNGYALGGGCECVLATDYRLATPDLRIGLPETKLGIMPGFGGSVRLPRMLGADSALEIIAAGKDVGAEHALKIGLVDGVVKQEKLIEGAIAVLRQAITGDLDWRAKRQPKLEPLKLSKIEAAMSFTIAKGMVAQTAGKHYPAPMTAVKTIEAAARFGREEALNLENKSFVPLAHTNEARALVGIFLNDQYVKGKAKKLTKDIETPKQAAVLGAGIMGGGIAYQSAWKGVPVIMKDINDKSLNLGMTEAAKLLNKQLERGKIDGLKLAGVISTIHPTLDYAGFDRVDVVVEAVVENPKVKKAVLAETEQKVRPETVLASNTSTIPIGELASALERPENFCGMHFFNPVHRMPLVEIIRGEKSSDETIAKVVAWASKMGKTPIVVNDCPGFFVNRVLFPYFAGFSQLLRDGADFRKVDKVMEKQFGWPMGPAYLLDVVGIDTAHHAQAVMAAGFPQRMQKEYRDAIDALFDASRFGQKNGLGFWRYKEDSKGKPKKEEDAAVDDLLASVSQPKRDFSDDEIIARMMIPMINEVVRCLEEGIIASPAEADMALVYGLGFPPFHGGAFRWLDTQGSAKYLDMAQQYQHLGPLYEVPEGLRNKARHNEPYYPPVEPARPVGSLKTA</sequence>
<keyword id="KW-0276">Fatty acid metabolism</keyword>
<keyword id="KW-0413">Isomerase</keyword>
<keyword id="KW-0442">Lipid degradation</keyword>
<keyword id="KW-0443">Lipid metabolism</keyword>
<keyword id="KW-0456">Lyase</keyword>
<keyword id="KW-0511">Multifunctional enzyme</keyword>
<keyword id="KW-0520">NAD</keyword>
<keyword id="KW-0560">Oxidoreductase</keyword>
<reference key="1">
    <citation type="submission" date="2007-11" db="EMBL/GenBank/DDBJ databases">
        <authorList>
            <consortium name="The Salmonella enterica serovar Paratyphi B Genome Sequencing Project"/>
            <person name="McClelland M."/>
            <person name="Sanderson E.K."/>
            <person name="Porwollik S."/>
            <person name="Spieth J."/>
            <person name="Clifton W.S."/>
            <person name="Fulton R."/>
            <person name="Cordes M."/>
            <person name="Wollam A."/>
            <person name="Shah N."/>
            <person name="Pepin K."/>
            <person name="Bhonagiri V."/>
            <person name="Nash W."/>
            <person name="Johnson M."/>
            <person name="Thiruvilangam P."/>
            <person name="Wilson R."/>
        </authorList>
    </citation>
    <scope>NUCLEOTIDE SEQUENCE [LARGE SCALE GENOMIC DNA]</scope>
    <source>
        <strain>ATCC BAA-1250 / SPB7</strain>
    </source>
</reference>
<dbReference type="EC" id="4.2.1.17" evidence="1"/>
<dbReference type="EC" id="5.1.2.3" evidence="1"/>
<dbReference type="EC" id="5.3.3.8" evidence="1"/>
<dbReference type="EC" id="1.1.1.35" evidence="1"/>
<dbReference type="EMBL" id="CP000886">
    <property type="protein sequence ID" value="ABX70238.1"/>
    <property type="molecule type" value="Genomic_DNA"/>
</dbReference>
<dbReference type="RefSeq" id="WP_000966001.1">
    <property type="nucleotide sequence ID" value="NC_010102.1"/>
</dbReference>
<dbReference type="SMR" id="A9MYB0"/>
<dbReference type="KEGG" id="spq:SPAB_04939"/>
<dbReference type="PATRIC" id="fig|1016998.12.peg.4637"/>
<dbReference type="HOGENOM" id="CLU_009834_16_3_6"/>
<dbReference type="BioCyc" id="SENT1016998:SPAB_RS20090-MONOMER"/>
<dbReference type="UniPathway" id="UPA00659"/>
<dbReference type="Proteomes" id="UP000008556">
    <property type="component" value="Chromosome"/>
</dbReference>
<dbReference type="GO" id="GO:0036125">
    <property type="term" value="C:fatty acid beta-oxidation multienzyme complex"/>
    <property type="evidence" value="ECO:0007669"/>
    <property type="project" value="InterPro"/>
</dbReference>
<dbReference type="GO" id="GO:0008692">
    <property type="term" value="F:3-hydroxybutyryl-CoA epimerase activity"/>
    <property type="evidence" value="ECO:0007669"/>
    <property type="project" value="UniProtKB-UniRule"/>
</dbReference>
<dbReference type="GO" id="GO:0004165">
    <property type="term" value="F:delta(3)-delta(2)-enoyl-CoA isomerase activity"/>
    <property type="evidence" value="ECO:0007669"/>
    <property type="project" value="UniProtKB-UniRule"/>
</dbReference>
<dbReference type="GO" id="GO:0004300">
    <property type="term" value="F:enoyl-CoA hydratase activity"/>
    <property type="evidence" value="ECO:0007669"/>
    <property type="project" value="UniProtKB-UniRule"/>
</dbReference>
<dbReference type="GO" id="GO:0016509">
    <property type="term" value="F:long-chain-3-hydroxyacyl-CoA dehydrogenase activity"/>
    <property type="evidence" value="ECO:0007669"/>
    <property type="project" value="TreeGrafter"/>
</dbReference>
<dbReference type="GO" id="GO:0070403">
    <property type="term" value="F:NAD+ binding"/>
    <property type="evidence" value="ECO:0007669"/>
    <property type="project" value="InterPro"/>
</dbReference>
<dbReference type="GO" id="GO:0006635">
    <property type="term" value="P:fatty acid beta-oxidation"/>
    <property type="evidence" value="ECO:0007669"/>
    <property type="project" value="UniProtKB-UniRule"/>
</dbReference>
<dbReference type="CDD" id="cd06558">
    <property type="entry name" value="crotonase-like"/>
    <property type="match status" value="1"/>
</dbReference>
<dbReference type="FunFam" id="1.10.1040.50:FF:000001">
    <property type="entry name" value="Fatty acid oxidation complex subunit alpha"/>
    <property type="match status" value="1"/>
</dbReference>
<dbReference type="FunFam" id="3.90.226.10:FF:000018">
    <property type="entry name" value="Fatty acid oxidation complex subunit alpha"/>
    <property type="match status" value="1"/>
</dbReference>
<dbReference type="FunFam" id="3.40.50.720:FF:000009">
    <property type="entry name" value="Fatty oxidation complex, alpha subunit"/>
    <property type="match status" value="1"/>
</dbReference>
<dbReference type="Gene3D" id="1.10.1040.50">
    <property type="match status" value="1"/>
</dbReference>
<dbReference type="Gene3D" id="3.90.226.10">
    <property type="entry name" value="2-enoyl-CoA Hydratase, Chain A, domain 1"/>
    <property type="match status" value="1"/>
</dbReference>
<dbReference type="Gene3D" id="3.40.50.720">
    <property type="entry name" value="NAD(P)-binding Rossmann-like Domain"/>
    <property type="match status" value="1"/>
</dbReference>
<dbReference type="HAMAP" id="MF_01621">
    <property type="entry name" value="FadB"/>
    <property type="match status" value="1"/>
</dbReference>
<dbReference type="InterPro" id="IPR006180">
    <property type="entry name" value="3-OHacyl-CoA_DH_CS"/>
</dbReference>
<dbReference type="InterPro" id="IPR006176">
    <property type="entry name" value="3-OHacyl-CoA_DH_NAD-bd"/>
</dbReference>
<dbReference type="InterPro" id="IPR006108">
    <property type="entry name" value="3HC_DH_C"/>
</dbReference>
<dbReference type="InterPro" id="IPR008927">
    <property type="entry name" value="6-PGluconate_DH-like_C_sf"/>
</dbReference>
<dbReference type="InterPro" id="IPR029045">
    <property type="entry name" value="ClpP/crotonase-like_dom_sf"/>
</dbReference>
<dbReference type="InterPro" id="IPR018376">
    <property type="entry name" value="Enoyl-CoA_hyd/isom_CS"/>
</dbReference>
<dbReference type="InterPro" id="IPR001753">
    <property type="entry name" value="Enoyl-CoA_hydra/iso"/>
</dbReference>
<dbReference type="InterPro" id="IPR050136">
    <property type="entry name" value="FA_oxidation_alpha_subunit"/>
</dbReference>
<dbReference type="InterPro" id="IPR012799">
    <property type="entry name" value="FadB"/>
</dbReference>
<dbReference type="InterPro" id="IPR036291">
    <property type="entry name" value="NAD(P)-bd_dom_sf"/>
</dbReference>
<dbReference type="NCBIfam" id="TIGR02437">
    <property type="entry name" value="FadB"/>
    <property type="match status" value="1"/>
</dbReference>
<dbReference type="NCBIfam" id="NF008727">
    <property type="entry name" value="PRK11730.1"/>
    <property type="match status" value="1"/>
</dbReference>
<dbReference type="PANTHER" id="PTHR43612">
    <property type="entry name" value="TRIFUNCTIONAL ENZYME SUBUNIT ALPHA"/>
    <property type="match status" value="1"/>
</dbReference>
<dbReference type="PANTHER" id="PTHR43612:SF3">
    <property type="entry name" value="TRIFUNCTIONAL ENZYME SUBUNIT ALPHA, MITOCHONDRIAL"/>
    <property type="match status" value="1"/>
</dbReference>
<dbReference type="Pfam" id="PF00725">
    <property type="entry name" value="3HCDH"/>
    <property type="match status" value="2"/>
</dbReference>
<dbReference type="Pfam" id="PF02737">
    <property type="entry name" value="3HCDH_N"/>
    <property type="match status" value="1"/>
</dbReference>
<dbReference type="Pfam" id="PF00378">
    <property type="entry name" value="ECH_1"/>
    <property type="match status" value="1"/>
</dbReference>
<dbReference type="SUPFAM" id="SSF48179">
    <property type="entry name" value="6-phosphogluconate dehydrogenase C-terminal domain-like"/>
    <property type="match status" value="2"/>
</dbReference>
<dbReference type="SUPFAM" id="SSF52096">
    <property type="entry name" value="ClpP/crotonase"/>
    <property type="match status" value="1"/>
</dbReference>
<dbReference type="SUPFAM" id="SSF51735">
    <property type="entry name" value="NAD(P)-binding Rossmann-fold domains"/>
    <property type="match status" value="1"/>
</dbReference>
<dbReference type="PROSITE" id="PS00067">
    <property type="entry name" value="3HCDH"/>
    <property type="match status" value="1"/>
</dbReference>
<dbReference type="PROSITE" id="PS00166">
    <property type="entry name" value="ENOYL_COA_HYDRATASE"/>
    <property type="match status" value="1"/>
</dbReference>